<accession>A4FBE7</accession>
<gene>
    <name evidence="1" type="primary">aroK</name>
    <name type="ordered locus">SACE_2066</name>
</gene>
<evidence type="ECO:0000255" key="1">
    <source>
        <dbReference type="HAMAP-Rule" id="MF_00109"/>
    </source>
</evidence>
<dbReference type="EC" id="2.7.1.71" evidence="1"/>
<dbReference type="EMBL" id="AM420293">
    <property type="protein sequence ID" value="CAM01372.1"/>
    <property type="molecule type" value="Genomic_DNA"/>
</dbReference>
<dbReference type="RefSeq" id="WP_009943056.1">
    <property type="nucleotide sequence ID" value="NC_009142.1"/>
</dbReference>
<dbReference type="SMR" id="A4FBE7"/>
<dbReference type="STRING" id="405948.SACE_2066"/>
<dbReference type="KEGG" id="sen:SACE_2066"/>
<dbReference type="eggNOG" id="COG0703">
    <property type="taxonomic scope" value="Bacteria"/>
</dbReference>
<dbReference type="HOGENOM" id="CLU_057607_3_3_11"/>
<dbReference type="OrthoDB" id="9800332at2"/>
<dbReference type="UniPathway" id="UPA00053">
    <property type="reaction ID" value="UER00088"/>
</dbReference>
<dbReference type="Proteomes" id="UP000006728">
    <property type="component" value="Chromosome"/>
</dbReference>
<dbReference type="GO" id="GO:0005829">
    <property type="term" value="C:cytosol"/>
    <property type="evidence" value="ECO:0007669"/>
    <property type="project" value="TreeGrafter"/>
</dbReference>
<dbReference type="GO" id="GO:0005524">
    <property type="term" value="F:ATP binding"/>
    <property type="evidence" value="ECO:0007669"/>
    <property type="project" value="UniProtKB-UniRule"/>
</dbReference>
<dbReference type="GO" id="GO:0000287">
    <property type="term" value="F:magnesium ion binding"/>
    <property type="evidence" value="ECO:0007669"/>
    <property type="project" value="UniProtKB-UniRule"/>
</dbReference>
<dbReference type="GO" id="GO:0004765">
    <property type="term" value="F:shikimate kinase activity"/>
    <property type="evidence" value="ECO:0007669"/>
    <property type="project" value="UniProtKB-UniRule"/>
</dbReference>
<dbReference type="GO" id="GO:0008652">
    <property type="term" value="P:amino acid biosynthetic process"/>
    <property type="evidence" value="ECO:0007669"/>
    <property type="project" value="UniProtKB-KW"/>
</dbReference>
<dbReference type="GO" id="GO:0009073">
    <property type="term" value="P:aromatic amino acid family biosynthetic process"/>
    <property type="evidence" value="ECO:0007669"/>
    <property type="project" value="UniProtKB-KW"/>
</dbReference>
<dbReference type="GO" id="GO:0009423">
    <property type="term" value="P:chorismate biosynthetic process"/>
    <property type="evidence" value="ECO:0007669"/>
    <property type="project" value="UniProtKB-UniRule"/>
</dbReference>
<dbReference type="CDD" id="cd00464">
    <property type="entry name" value="SK"/>
    <property type="match status" value="1"/>
</dbReference>
<dbReference type="Gene3D" id="3.40.50.300">
    <property type="entry name" value="P-loop containing nucleotide triphosphate hydrolases"/>
    <property type="match status" value="1"/>
</dbReference>
<dbReference type="HAMAP" id="MF_00109">
    <property type="entry name" value="Shikimate_kinase"/>
    <property type="match status" value="1"/>
</dbReference>
<dbReference type="InterPro" id="IPR027417">
    <property type="entry name" value="P-loop_NTPase"/>
</dbReference>
<dbReference type="InterPro" id="IPR031322">
    <property type="entry name" value="Shikimate/glucono_kinase"/>
</dbReference>
<dbReference type="InterPro" id="IPR000623">
    <property type="entry name" value="Shikimate_kinase/TSH1"/>
</dbReference>
<dbReference type="InterPro" id="IPR023000">
    <property type="entry name" value="Shikimate_kinase_CS"/>
</dbReference>
<dbReference type="PANTHER" id="PTHR21087">
    <property type="entry name" value="SHIKIMATE KINASE"/>
    <property type="match status" value="1"/>
</dbReference>
<dbReference type="PANTHER" id="PTHR21087:SF16">
    <property type="entry name" value="SHIKIMATE KINASE 1, CHLOROPLASTIC"/>
    <property type="match status" value="1"/>
</dbReference>
<dbReference type="Pfam" id="PF01202">
    <property type="entry name" value="SKI"/>
    <property type="match status" value="1"/>
</dbReference>
<dbReference type="PRINTS" id="PR01100">
    <property type="entry name" value="SHIKIMTKNASE"/>
</dbReference>
<dbReference type="SUPFAM" id="SSF52540">
    <property type="entry name" value="P-loop containing nucleoside triphosphate hydrolases"/>
    <property type="match status" value="1"/>
</dbReference>
<dbReference type="PROSITE" id="PS01128">
    <property type="entry name" value="SHIKIMATE_KINASE"/>
    <property type="match status" value="1"/>
</dbReference>
<reference key="1">
    <citation type="journal article" date="2007" name="Nat. Biotechnol.">
        <title>Complete genome sequence of the erythromycin-producing bacterium Saccharopolyspora erythraea NRRL23338.</title>
        <authorList>
            <person name="Oliynyk M."/>
            <person name="Samborskyy M."/>
            <person name="Lester J.B."/>
            <person name="Mironenko T."/>
            <person name="Scott N."/>
            <person name="Dickens S."/>
            <person name="Haydock S.F."/>
            <person name="Leadlay P.F."/>
        </authorList>
    </citation>
    <scope>NUCLEOTIDE SEQUENCE [LARGE SCALE GENOMIC DNA]</scope>
    <source>
        <strain>ATCC 11635 / DSM 40517 / JCM 4748 / NBRC 13426 / NCIMB 8594 / NRRL 2338</strain>
    </source>
</reference>
<protein>
    <recommendedName>
        <fullName evidence="1">Shikimate kinase</fullName>
        <shortName evidence="1">SK</shortName>
        <ecNumber evidence="1">2.7.1.71</ecNumber>
    </recommendedName>
</protein>
<name>AROK_SACEN</name>
<feature type="chain" id="PRO_1000117467" description="Shikimate kinase">
    <location>
        <begin position="1"/>
        <end position="175"/>
    </location>
</feature>
<feature type="binding site" evidence="1">
    <location>
        <begin position="12"/>
        <end position="17"/>
    </location>
    <ligand>
        <name>ATP</name>
        <dbReference type="ChEBI" id="CHEBI:30616"/>
    </ligand>
</feature>
<feature type="binding site" evidence="1">
    <location>
        <position position="16"/>
    </location>
    <ligand>
        <name>Mg(2+)</name>
        <dbReference type="ChEBI" id="CHEBI:18420"/>
    </ligand>
</feature>
<feature type="binding site" evidence="1">
    <location>
        <position position="34"/>
    </location>
    <ligand>
        <name>substrate</name>
    </ligand>
</feature>
<feature type="binding site" evidence="1">
    <location>
        <position position="58"/>
    </location>
    <ligand>
        <name>substrate</name>
    </ligand>
</feature>
<feature type="binding site" evidence="1">
    <location>
        <position position="80"/>
    </location>
    <ligand>
        <name>substrate</name>
    </ligand>
</feature>
<feature type="binding site" evidence="1">
    <location>
        <position position="117"/>
    </location>
    <ligand>
        <name>ATP</name>
        <dbReference type="ChEBI" id="CHEBI:30616"/>
    </ligand>
</feature>
<feature type="binding site" evidence="1">
    <location>
        <position position="136"/>
    </location>
    <ligand>
        <name>substrate</name>
    </ligand>
</feature>
<organism>
    <name type="scientific">Saccharopolyspora erythraea (strain ATCC 11635 / DSM 40517 / JCM 4748 / NBRC 13426 / NCIMB 8594 / NRRL 2338)</name>
    <dbReference type="NCBI Taxonomy" id="405948"/>
    <lineage>
        <taxon>Bacteria</taxon>
        <taxon>Bacillati</taxon>
        <taxon>Actinomycetota</taxon>
        <taxon>Actinomycetes</taxon>
        <taxon>Pseudonocardiales</taxon>
        <taxon>Pseudonocardiaceae</taxon>
        <taxon>Saccharopolyspora</taxon>
    </lineage>
</organism>
<proteinExistence type="inferred from homology"/>
<comment type="function">
    <text evidence="1">Catalyzes the specific phosphorylation of the 3-hydroxyl group of shikimic acid using ATP as a cosubstrate.</text>
</comment>
<comment type="catalytic activity">
    <reaction evidence="1">
        <text>shikimate + ATP = 3-phosphoshikimate + ADP + H(+)</text>
        <dbReference type="Rhea" id="RHEA:13121"/>
        <dbReference type="ChEBI" id="CHEBI:15378"/>
        <dbReference type="ChEBI" id="CHEBI:30616"/>
        <dbReference type="ChEBI" id="CHEBI:36208"/>
        <dbReference type="ChEBI" id="CHEBI:145989"/>
        <dbReference type="ChEBI" id="CHEBI:456216"/>
        <dbReference type="EC" id="2.7.1.71"/>
    </reaction>
</comment>
<comment type="cofactor">
    <cofactor evidence="1">
        <name>Mg(2+)</name>
        <dbReference type="ChEBI" id="CHEBI:18420"/>
    </cofactor>
    <text evidence="1">Binds 1 Mg(2+) ion per subunit.</text>
</comment>
<comment type="pathway">
    <text evidence="1">Metabolic intermediate biosynthesis; chorismate biosynthesis; chorismate from D-erythrose 4-phosphate and phosphoenolpyruvate: step 5/7.</text>
</comment>
<comment type="subunit">
    <text evidence="1">Monomer.</text>
</comment>
<comment type="subcellular location">
    <subcellularLocation>
        <location evidence="1">Cytoplasm</location>
    </subcellularLocation>
</comment>
<comment type="similarity">
    <text evidence="1">Belongs to the shikimate kinase family.</text>
</comment>
<sequence length="175" mass="18354">MSPCAVVVGPPGAGKTTVGRLLAERLGVAFRDTDDDVVRVAGKPIAEIFTGDGEPVFRAMEERAVAAALAEHDGVLSLGGGSVLSERTRALLAEQPVVFLSVGLAEGARRTGLSTARPLLAGVNPRATFKALLDARLPLYREVATWELATDGVEPDALVDRIVERVTADRAAGRE</sequence>
<keyword id="KW-0028">Amino-acid biosynthesis</keyword>
<keyword id="KW-0057">Aromatic amino acid biosynthesis</keyword>
<keyword id="KW-0067">ATP-binding</keyword>
<keyword id="KW-0963">Cytoplasm</keyword>
<keyword id="KW-0418">Kinase</keyword>
<keyword id="KW-0460">Magnesium</keyword>
<keyword id="KW-0479">Metal-binding</keyword>
<keyword id="KW-0547">Nucleotide-binding</keyword>
<keyword id="KW-1185">Reference proteome</keyword>
<keyword id="KW-0808">Transferase</keyword>